<comment type="function">
    <text evidence="2 3 7">G1/S-specific cyclin partner of the cyclin-dependent kinase (CDK) PHO85. Essential for the control of the cell cycle at the G1/S (start) transition. Together with cyclin PCL1, positively controls degradation of sphingoid long chain base kinase LCB4. The PCL2-PHO85 cyclin-CDK holoenzyme phosphorylates LCB4, which is required for its ubiquitination and degradation. PCL2-PHO85 also phosphorylates RVS167, linking cyclin-CDK activity with organization of the actin cytoskeleton.</text>
</comment>
<comment type="subunit">
    <text evidence="4 5 7">Forms a cyclin-CDK complex with PHO85. Interacts with RVS167.</text>
</comment>
<comment type="interaction">
    <interactant intactId="EBI-4499">
        <id>P25693</id>
    </interactant>
    <interactant intactId="EBI-13327">
        <id>P17157</id>
        <label>PHO85</label>
    </interactant>
    <organismsDiffer>false</organismsDiffer>
    <experiments>8</experiments>
</comment>
<comment type="interaction">
    <interactant intactId="EBI-4499">
        <id>P25693</id>
    </interactant>
    <interactant intactId="EBI-8591">
        <id>P10591</id>
        <label>SSA1</label>
    </interactant>
    <organismsDiffer>false</organismsDiffer>
    <experiments>3</experiments>
</comment>
<comment type="subcellular location">
    <subcellularLocation>
        <location evidence="2">Cytoplasm</location>
    </subcellularLocation>
    <subcellularLocation>
        <location evidence="2">Nucleus</location>
    </subcellularLocation>
    <text>Localizes to sites of polarized growth, namely the incipient bud site, the bud tip and the bud neck.</text>
</comment>
<comment type="induction">
    <text evidence="4 6">By transcription factors SBF (SWI4-SWI6 cell-cycle box binding factor) and SWI5 in a cell cycle-regulated manner. Peaks in G1 phase.</text>
</comment>
<comment type="similarity">
    <text evidence="8">Belongs to the cyclin family. PCL1,2 subfamily.</text>
</comment>
<comment type="sequence caution" evidence="8">
    <conflict type="frameshift">
        <sequence resource="EMBL-CDS" id="CAA98695"/>
    </conflict>
</comment>
<dbReference type="EMBL" id="X56956">
    <property type="protein sequence ID" value="CAA40277.1"/>
    <property type="molecule type" value="Genomic_DNA"/>
</dbReference>
<dbReference type="EMBL" id="Z74175">
    <property type="protein sequence ID" value="CAA98695.1"/>
    <property type="status" value="ALT_FRAME"/>
    <property type="molecule type" value="Genomic_DNA"/>
</dbReference>
<dbReference type="EMBL" id="BK006938">
    <property type="protein sequence ID" value="DAA11733.1"/>
    <property type="molecule type" value="Genomic_DNA"/>
</dbReference>
<dbReference type="PIR" id="S67670">
    <property type="entry name" value="S67670"/>
</dbReference>
<dbReference type="RefSeq" id="NP_010156.2">
    <property type="nucleotide sequence ID" value="NM_001180186.1"/>
</dbReference>
<dbReference type="SMR" id="P25693"/>
<dbReference type="BioGRID" id="31936">
    <property type="interactions" value="87"/>
</dbReference>
<dbReference type="ComplexPortal" id="CPX-1694">
    <property type="entry name" value="PCL2-PHO85 kinase complex"/>
</dbReference>
<dbReference type="DIP" id="DIP-1495N"/>
<dbReference type="FunCoup" id="P25693">
    <property type="interactions" value="283"/>
</dbReference>
<dbReference type="IntAct" id="P25693">
    <property type="interactions" value="8"/>
</dbReference>
<dbReference type="MINT" id="P25693"/>
<dbReference type="STRING" id="4932.YDL127W"/>
<dbReference type="iPTMnet" id="P25693"/>
<dbReference type="PaxDb" id="4932-YDL127W"/>
<dbReference type="PeptideAtlas" id="P25693"/>
<dbReference type="EnsemblFungi" id="YDL127W_mRNA">
    <property type="protein sequence ID" value="YDL127W"/>
    <property type="gene ID" value="YDL127W"/>
</dbReference>
<dbReference type="GeneID" id="851430"/>
<dbReference type="KEGG" id="sce:YDL127W"/>
<dbReference type="AGR" id="SGD:S000002285"/>
<dbReference type="SGD" id="S000002285">
    <property type="gene designation" value="PCL2"/>
</dbReference>
<dbReference type="VEuPathDB" id="FungiDB:YDL127W"/>
<dbReference type="eggNOG" id="KOG1674">
    <property type="taxonomic scope" value="Eukaryota"/>
</dbReference>
<dbReference type="GeneTree" id="ENSGT00390000000862"/>
<dbReference type="HOGENOM" id="CLU_018149_0_0_1"/>
<dbReference type="InParanoid" id="P25693"/>
<dbReference type="OMA" id="SPMNKHW"/>
<dbReference type="OrthoDB" id="10250320at2759"/>
<dbReference type="BioCyc" id="YEAST:G3O-29526-MONOMER"/>
<dbReference type="BioGRID-ORCS" id="851430">
    <property type="hits" value="0 hits in 10 CRISPR screens"/>
</dbReference>
<dbReference type="PRO" id="PR:P25693"/>
<dbReference type="Proteomes" id="UP000002311">
    <property type="component" value="Chromosome IV"/>
</dbReference>
<dbReference type="RNAct" id="P25693">
    <property type="molecule type" value="protein"/>
</dbReference>
<dbReference type="GO" id="GO:0005935">
    <property type="term" value="C:cellular bud neck"/>
    <property type="evidence" value="ECO:0000314"/>
    <property type="project" value="SGD"/>
</dbReference>
<dbReference type="GO" id="GO:0005934">
    <property type="term" value="C:cellular bud tip"/>
    <property type="evidence" value="ECO:0000314"/>
    <property type="project" value="SGD"/>
</dbReference>
<dbReference type="GO" id="GO:0000307">
    <property type="term" value="C:cyclin-dependent protein kinase holoenzyme complex"/>
    <property type="evidence" value="ECO:0000353"/>
    <property type="project" value="SGD"/>
</dbReference>
<dbReference type="GO" id="GO:0005737">
    <property type="term" value="C:cytoplasm"/>
    <property type="evidence" value="ECO:0007669"/>
    <property type="project" value="UniProtKB-SubCell"/>
</dbReference>
<dbReference type="GO" id="GO:0000131">
    <property type="term" value="C:incipient cellular bud site"/>
    <property type="evidence" value="ECO:0000314"/>
    <property type="project" value="SGD"/>
</dbReference>
<dbReference type="GO" id="GO:0005634">
    <property type="term" value="C:nucleus"/>
    <property type="evidence" value="ECO:0000314"/>
    <property type="project" value="SGD"/>
</dbReference>
<dbReference type="GO" id="GO:0016538">
    <property type="term" value="F:cyclin-dependent protein serine/threonine kinase regulator activity"/>
    <property type="evidence" value="ECO:0000314"/>
    <property type="project" value="SGD"/>
</dbReference>
<dbReference type="GO" id="GO:0019901">
    <property type="term" value="F:protein kinase binding"/>
    <property type="evidence" value="ECO:0007669"/>
    <property type="project" value="InterPro"/>
</dbReference>
<dbReference type="GO" id="GO:0044843">
    <property type="term" value="P:cell cycle G1/S phase transition"/>
    <property type="evidence" value="ECO:0000303"/>
    <property type="project" value="ComplexPortal"/>
</dbReference>
<dbReference type="GO" id="GO:0051301">
    <property type="term" value="P:cell division"/>
    <property type="evidence" value="ECO:0007669"/>
    <property type="project" value="UniProtKB-KW"/>
</dbReference>
<dbReference type="GO" id="GO:0030952">
    <property type="term" value="P:establishment or maintenance of cytoskeleton polarity"/>
    <property type="evidence" value="ECO:0000303"/>
    <property type="project" value="ComplexPortal"/>
</dbReference>
<dbReference type="GO" id="GO:0001676">
    <property type="term" value="P:long-chain fatty acid metabolic process"/>
    <property type="evidence" value="ECO:0000303"/>
    <property type="project" value="ComplexPortal"/>
</dbReference>
<dbReference type="GO" id="GO:0051726">
    <property type="term" value="P:regulation of cell cycle"/>
    <property type="evidence" value="ECO:0007669"/>
    <property type="project" value="InterPro"/>
</dbReference>
<dbReference type="GO" id="GO:0051302">
    <property type="term" value="P:regulation of cell division"/>
    <property type="evidence" value="ECO:0000303"/>
    <property type="project" value="ComplexPortal"/>
</dbReference>
<dbReference type="GO" id="GO:0032878">
    <property type="term" value="P:regulation of establishment or maintenance of cell polarity"/>
    <property type="evidence" value="ECO:0000316"/>
    <property type="project" value="SGD"/>
</dbReference>
<dbReference type="GO" id="GO:0031106">
    <property type="term" value="P:septin ring organization"/>
    <property type="evidence" value="ECO:0000316"/>
    <property type="project" value="SGD"/>
</dbReference>
<dbReference type="CDD" id="cd20557">
    <property type="entry name" value="CYCLIN_ScPCL1-like"/>
    <property type="match status" value="1"/>
</dbReference>
<dbReference type="FunFam" id="1.10.472.10:FF:000084">
    <property type="entry name" value="PCL9p Cyclin"/>
    <property type="match status" value="1"/>
</dbReference>
<dbReference type="Gene3D" id="1.10.472.10">
    <property type="entry name" value="Cyclin-like"/>
    <property type="match status" value="1"/>
</dbReference>
<dbReference type="InterPro" id="IPR013763">
    <property type="entry name" value="Cyclin-like_dom"/>
</dbReference>
<dbReference type="InterPro" id="IPR036915">
    <property type="entry name" value="Cyclin-like_sf"/>
</dbReference>
<dbReference type="InterPro" id="IPR006671">
    <property type="entry name" value="Cyclin_N"/>
</dbReference>
<dbReference type="InterPro" id="IPR013922">
    <property type="entry name" value="Cyclin_PHO80-like"/>
</dbReference>
<dbReference type="InterPro" id="IPR012104">
    <property type="entry name" value="PHO85_cyclin_1/2/9"/>
</dbReference>
<dbReference type="PANTHER" id="PTHR15615">
    <property type="match status" value="1"/>
</dbReference>
<dbReference type="PANTHER" id="PTHR15615:SF10">
    <property type="entry name" value="PHO85 CYCLIN-2-RELATED"/>
    <property type="match status" value="1"/>
</dbReference>
<dbReference type="Pfam" id="PF00134">
    <property type="entry name" value="Cyclin_N"/>
    <property type="match status" value="1"/>
</dbReference>
<dbReference type="PIRSF" id="PIRSF016511">
    <property type="entry name" value="Cyclin_Pcl"/>
    <property type="match status" value="1"/>
</dbReference>
<dbReference type="SMART" id="SM00385">
    <property type="entry name" value="CYCLIN"/>
    <property type="match status" value="1"/>
</dbReference>
<dbReference type="SUPFAM" id="SSF47954">
    <property type="entry name" value="Cyclin-like"/>
    <property type="match status" value="1"/>
</dbReference>
<evidence type="ECO:0000256" key="1">
    <source>
        <dbReference type="SAM" id="MobiDB-lite"/>
    </source>
</evidence>
<evidence type="ECO:0000269" key="2">
    <source>
    </source>
</evidence>
<evidence type="ECO:0000269" key="3">
    <source>
    </source>
</evidence>
<evidence type="ECO:0000269" key="4">
    <source>
    </source>
</evidence>
<evidence type="ECO:0000269" key="5">
    <source>
    </source>
</evidence>
<evidence type="ECO:0000269" key="6">
    <source>
    </source>
</evidence>
<evidence type="ECO:0000269" key="7">
    <source>
    </source>
</evidence>
<evidence type="ECO:0000305" key="8"/>
<reference key="1">
    <citation type="journal article" date="1991" name="J. Cell Biol.">
        <title>Yeast cell cycle protein CDC48p shows full-length homology to the mammalian protein VCP and is a member of a protein family involved in secretion, peroxisome formation, and gene expression.</title>
        <authorList>
            <person name="Froehlich K.-U."/>
            <person name="Fries H.W."/>
            <person name="Ruediger M."/>
            <person name="Erdmann R."/>
            <person name="Botstein D."/>
            <person name="Mecke D."/>
        </authorList>
    </citation>
    <scope>NUCLEOTIDE SEQUENCE [GENOMIC DNA]</scope>
</reference>
<reference key="2">
    <citation type="submission" date="1996-07" db="EMBL/GenBank/DDBJ databases">
        <authorList>
            <person name="Froehlich K.-U."/>
        </authorList>
    </citation>
    <scope>SEQUENCE REVISION</scope>
</reference>
<reference key="3">
    <citation type="journal article" date="1997" name="Nature">
        <title>The nucleotide sequence of Saccharomyces cerevisiae chromosome IV.</title>
        <authorList>
            <person name="Jacq C."/>
            <person name="Alt-Moerbe J."/>
            <person name="Andre B."/>
            <person name="Arnold W."/>
            <person name="Bahr A."/>
            <person name="Ballesta J.P.G."/>
            <person name="Bargues M."/>
            <person name="Baron L."/>
            <person name="Becker A."/>
            <person name="Biteau N."/>
            <person name="Bloecker H."/>
            <person name="Blugeon C."/>
            <person name="Boskovic J."/>
            <person name="Brandt P."/>
            <person name="Brueckner M."/>
            <person name="Buitrago M.J."/>
            <person name="Coster F."/>
            <person name="Delaveau T."/>
            <person name="del Rey F."/>
            <person name="Dujon B."/>
            <person name="Eide L.G."/>
            <person name="Garcia-Cantalejo J.M."/>
            <person name="Goffeau A."/>
            <person name="Gomez-Peris A."/>
            <person name="Granotier C."/>
            <person name="Hanemann V."/>
            <person name="Hankeln T."/>
            <person name="Hoheisel J.D."/>
            <person name="Jaeger W."/>
            <person name="Jimenez A."/>
            <person name="Jonniaux J.-L."/>
            <person name="Kraemer C."/>
            <person name="Kuester H."/>
            <person name="Laamanen P."/>
            <person name="Legros Y."/>
            <person name="Louis E.J."/>
            <person name="Moeller-Rieker S."/>
            <person name="Monnet A."/>
            <person name="Moro M."/>
            <person name="Mueller-Auer S."/>
            <person name="Nussbaumer B."/>
            <person name="Paricio N."/>
            <person name="Paulin L."/>
            <person name="Perea J."/>
            <person name="Perez-Alonso M."/>
            <person name="Perez-Ortin J.E."/>
            <person name="Pohl T.M."/>
            <person name="Prydz H."/>
            <person name="Purnelle B."/>
            <person name="Rasmussen S.W."/>
            <person name="Remacha M.A."/>
            <person name="Revuelta J.L."/>
            <person name="Rieger M."/>
            <person name="Salom D."/>
            <person name="Saluz H.P."/>
            <person name="Saiz J.E."/>
            <person name="Saren A.-M."/>
            <person name="Schaefer M."/>
            <person name="Scharfe M."/>
            <person name="Schmidt E.R."/>
            <person name="Schneider C."/>
            <person name="Scholler P."/>
            <person name="Schwarz S."/>
            <person name="Soler-Mira A."/>
            <person name="Urrestarazu L.A."/>
            <person name="Verhasselt P."/>
            <person name="Vissers S."/>
            <person name="Voet M."/>
            <person name="Volckaert G."/>
            <person name="Wagner G."/>
            <person name="Wambutt R."/>
            <person name="Wedler E."/>
            <person name="Wedler H."/>
            <person name="Woelfl S."/>
            <person name="Harris D.E."/>
            <person name="Bowman S."/>
            <person name="Brown D."/>
            <person name="Churcher C.M."/>
            <person name="Connor R."/>
            <person name="Dedman K."/>
            <person name="Gentles S."/>
            <person name="Hamlin N."/>
            <person name="Hunt S."/>
            <person name="Jones L."/>
            <person name="McDonald S."/>
            <person name="Murphy L.D."/>
            <person name="Niblett D."/>
            <person name="Odell C."/>
            <person name="Oliver K."/>
            <person name="Rajandream M.A."/>
            <person name="Richards C."/>
            <person name="Shore L."/>
            <person name="Walsh S.V."/>
            <person name="Barrell B.G."/>
            <person name="Dietrich F.S."/>
            <person name="Mulligan J.T."/>
            <person name="Allen E."/>
            <person name="Araujo R."/>
            <person name="Aviles E."/>
            <person name="Berno A."/>
            <person name="Carpenter J."/>
            <person name="Chen E."/>
            <person name="Cherry J.M."/>
            <person name="Chung E."/>
            <person name="Duncan M."/>
            <person name="Hunicke-Smith S."/>
            <person name="Hyman R.W."/>
            <person name="Komp C."/>
            <person name="Lashkari D."/>
            <person name="Lew H."/>
            <person name="Lin D."/>
            <person name="Mosedale D."/>
            <person name="Nakahara K."/>
            <person name="Namath A."/>
            <person name="Oefner P."/>
            <person name="Oh C."/>
            <person name="Petel F.X."/>
            <person name="Roberts D."/>
            <person name="Schramm S."/>
            <person name="Schroeder M."/>
            <person name="Shogren T."/>
            <person name="Shroff N."/>
            <person name="Winant A."/>
            <person name="Yelton M.A."/>
            <person name="Botstein D."/>
            <person name="Davis R.W."/>
            <person name="Johnston M."/>
            <person name="Andrews S."/>
            <person name="Brinkman R."/>
            <person name="Cooper J."/>
            <person name="Ding H."/>
            <person name="Du Z."/>
            <person name="Favello A."/>
            <person name="Fulton L."/>
            <person name="Gattung S."/>
            <person name="Greco T."/>
            <person name="Hallsworth K."/>
            <person name="Hawkins J."/>
            <person name="Hillier L.W."/>
            <person name="Jier M."/>
            <person name="Johnson D."/>
            <person name="Johnston L."/>
            <person name="Kirsten J."/>
            <person name="Kucaba T."/>
            <person name="Langston Y."/>
            <person name="Latreille P."/>
            <person name="Le T."/>
            <person name="Mardis E."/>
            <person name="Menezes S."/>
            <person name="Miller N."/>
            <person name="Nhan M."/>
            <person name="Pauley A."/>
            <person name="Peluso D."/>
            <person name="Rifkin L."/>
            <person name="Riles L."/>
            <person name="Taich A."/>
            <person name="Trevaskis E."/>
            <person name="Vignati D."/>
            <person name="Wilcox L."/>
            <person name="Wohldman P."/>
            <person name="Vaudin M."/>
            <person name="Wilson R."/>
            <person name="Waterston R."/>
            <person name="Albermann K."/>
            <person name="Hani J."/>
            <person name="Heumann K."/>
            <person name="Kleine K."/>
            <person name="Mewes H.-W."/>
            <person name="Zollner A."/>
            <person name="Zaccaria P."/>
        </authorList>
    </citation>
    <scope>NUCLEOTIDE SEQUENCE [LARGE SCALE GENOMIC DNA]</scope>
    <source>
        <strain>ATCC 204508 / S288c</strain>
    </source>
</reference>
<reference key="4">
    <citation type="journal article" date="2014" name="G3 (Bethesda)">
        <title>The reference genome sequence of Saccharomyces cerevisiae: Then and now.</title>
        <authorList>
            <person name="Engel S.R."/>
            <person name="Dietrich F.S."/>
            <person name="Fisk D.G."/>
            <person name="Binkley G."/>
            <person name="Balakrishnan R."/>
            <person name="Costanzo M.C."/>
            <person name="Dwight S.S."/>
            <person name="Hitz B.C."/>
            <person name="Karra K."/>
            <person name="Nash R.S."/>
            <person name="Weng S."/>
            <person name="Wong E.D."/>
            <person name="Lloyd P."/>
            <person name="Skrzypek M.S."/>
            <person name="Miyasato S.R."/>
            <person name="Simison M."/>
            <person name="Cherry J.M."/>
        </authorList>
    </citation>
    <scope>GENOME REANNOTATION</scope>
    <source>
        <strain>ATCC 204508 / S288c</strain>
    </source>
</reference>
<reference key="5">
    <citation type="journal article" date="1994" name="Science">
        <title>The PCL2 (ORFD)-PHO85 cyclin-dependent kinase complex: a cell cycle regulator in yeast.</title>
        <authorList>
            <person name="Measday V."/>
            <person name="Moore L."/>
            <person name="Ogas J."/>
            <person name="Tyers M."/>
            <person name="Andrews B.J."/>
        </authorList>
    </citation>
    <scope>CHARACTERIZATION</scope>
    <scope>INTERACTION WITH PHO85</scope>
    <scope>INDUCTION</scope>
</reference>
<reference key="6">
    <citation type="journal article" date="1997" name="Mol. Cell. Biol.">
        <title>A family of cyclin-like proteins that interact with the Pho85 cyclin-dependent kinase.</title>
        <authorList>
            <person name="Measday V."/>
            <person name="Moore L."/>
            <person name="Retnakaran R."/>
            <person name="Lee J."/>
            <person name="Donoviel M."/>
            <person name="Neiman A.M."/>
            <person name="Andrews B.J."/>
        </authorList>
    </citation>
    <scope>INTERACTION WITH PHO85</scope>
</reference>
<reference key="7">
    <citation type="journal article" date="1998" name="Curr. Biol.">
        <title>Interaction of yeast Rvs167 and Pho85 cyclin-dependent kinase complexes may link the cell cycle to the actin cytoskeleton.</title>
        <authorList>
            <person name="Lee J."/>
            <person name="Colwill K."/>
            <person name="Aneliunas V."/>
            <person name="Tennyson C.N."/>
            <person name="Moore L."/>
            <person name="Ho Y."/>
            <person name="Andrews B.J."/>
        </authorList>
    </citation>
    <scope>FUNCTION</scope>
    <scope>INTERACTION WITH RVS167</scope>
    <scope>PHOSPHORYLATION OF RVS167</scope>
</reference>
<reference key="8">
    <citation type="journal article" date="1998" name="Mol. Biol. Cell">
        <title>Swi5 controls a novel wave of cyclin synthesis in late mitosis.</title>
        <authorList>
            <person name="Aerne B.L."/>
            <person name="Johnson A.L."/>
            <person name="Toyn J.H."/>
            <person name="Johnston L.H."/>
        </authorList>
    </citation>
    <scope>INDUCTION</scope>
</reference>
<reference key="9">
    <citation type="journal article" date="2003" name="Nature">
        <title>Sequencing and comparison of yeast species to identify genes and regulatory elements.</title>
        <authorList>
            <person name="Kellis M."/>
            <person name="Patterson N."/>
            <person name="Endrizzi M."/>
            <person name="Birren B.W."/>
            <person name="Lander E.S."/>
        </authorList>
    </citation>
    <scope>IDENTIFICATION OF FRAMESHIFT</scope>
</reference>
<reference key="10">
    <citation type="journal article" date="2003" name="Mol. Biol. Cell">
        <title>Regulation of the yeast amphiphysin homologue Rvs167p by phosphorylation.</title>
        <authorList>
            <person name="Friesen H."/>
            <person name="Murphy K."/>
            <person name="Breitkreutz A."/>
            <person name="Tyers M."/>
            <person name="Andrews B.J."/>
        </authorList>
    </citation>
    <scope>PHOSPHORYLATION OF RVS167</scope>
</reference>
<reference key="11">
    <citation type="journal article" date="2004" name="Nat. Cell Biol.">
        <title>Late-G1 cyclin-CDK activity is essential for control of cell morphogenesis in budding yeast.</title>
        <authorList>
            <person name="Moffat J."/>
            <person name="Andrews B.J."/>
        </authorList>
    </citation>
    <scope>FUNCTION</scope>
    <scope>SUBCELLULAR LOCATION</scope>
</reference>
<reference key="12">
    <citation type="journal article" date="2005" name="J. Biol. Chem.">
        <title>Phosphorylation by Pho85 cyclin-dependent kinase acts as a signal for the down-regulation of the yeast sphingoid long-chain base kinase Lcb4 during the stationary phase.</title>
        <authorList>
            <person name="Iwaki S."/>
            <person name="Kihara A."/>
            <person name="Sano T."/>
            <person name="Igarashi Y."/>
        </authorList>
    </citation>
    <scope>FUNCTION</scope>
    <scope>PHOSPHORYLATION OF LCB4</scope>
</reference>
<accession>P25693</accession>
<accession>D6VRM3</accession>
<accession>Q07554</accession>
<keyword id="KW-0131">Cell cycle</keyword>
<keyword id="KW-0132">Cell division</keyword>
<keyword id="KW-0195">Cyclin</keyword>
<keyword id="KW-0963">Cytoplasm</keyword>
<keyword id="KW-0539">Nucleus</keyword>
<keyword id="KW-1185">Reference proteome</keyword>
<gene>
    <name type="primary">PCL2</name>
    <name type="synonym">CLN4</name>
    <name type="ordered locus">YDL127W</name>
    <name type="ORF">D2223</name>
</gene>
<name>PCL2_YEAST</name>
<feature type="chain" id="PRO_0000080500" description="PHO85 cyclin-2">
    <location>
        <begin position="1"/>
        <end position="308"/>
    </location>
</feature>
<feature type="domain" description="Cyclin N-terminal">
    <location>
        <begin position="18"/>
        <end position="146"/>
    </location>
</feature>
<feature type="region of interest" description="Disordered" evidence="1">
    <location>
        <begin position="248"/>
        <end position="270"/>
    </location>
</feature>
<feature type="compositionally biased region" description="Basic and acidic residues" evidence="1">
    <location>
        <begin position="255"/>
        <end position="264"/>
    </location>
</feature>
<sequence>MSNYEALLKFNRKAVSKEMVQYLASTTASIIKIKKTNSMIDIALPAPPLTKFINRLIKHSNVQTPTLMATSVYLAKLRSIIPSNVYGIETTRHRIFLGCLILAAKTLNDSSPLNKHWAEYTDGLLILREVNTIERELLEYFDWDVTISTDDLITCLSPFLKPIKEEQLYKSQRDCRTLKNFSAQEKDIVNKTSISHSRSSSNMSIPSLASTSTLSTLESRRSNLSNYSNRIRTLPELHESNNISDKFSPRTYNIDSKHDNKENRPIPTIKPFNFSKARPVILKTGLNKQIIKEDTKVKKSNWSNYFKS</sequence>
<protein>
    <recommendedName>
        <fullName>PHO85 cyclin-2</fullName>
    </recommendedName>
    <alternativeName>
        <fullName>Cyclin HCS26 homolog</fullName>
    </alternativeName>
    <alternativeName>
        <fullName>G1/S-specific cyclin PCL2</fullName>
    </alternativeName>
</protein>
<proteinExistence type="evidence at protein level"/>
<organism>
    <name type="scientific">Saccharomyces cerevisiae (strain ATCC 204508 / S288c)</name>
    <name type="common">Baker's yeast</name>
    <dbReference type="NCBI Taxonomy" id="559292"/>
    <lineage>
        <taxon>Eukaryota</taxon>
        <taxon>Fungi</taxon>
        <taxon>Dikarya</taxon>
        <taxon>Ascomycota</taxon>
        <taxon>Saccharomycotina</taxon>
        <taxon>Saccharomycetes</taxon>
        <taxon>Saccharomycetales</taxon>
        <taxon>Saccharomycetaceae</taxon>
        <taxon>Saccharomyces</taxon>
    </lineage>
</organism>